<accession>Q1IEI4</accession>
<organism>
    <name type="scientific">Pseudomonas entomophila (strain L48)</name>
    <dbReference type="NCBI Taxonomy" id="384676"/>
    <lineage>
        <taxon>Bacteria</taxon>
        <taxon>Pseudomonadati</taxon>
        <taxon>Pseudomonadota</taxon>
        <taxon>Gammaproteobacteria</taxon>
        <taxon>Pseudomonadales</taxon>
        <taxon>Pseudomonadaceae</taxon>
        <taxon>Pseudomonas</taxon>
    </lineage>
</organism>
<name>RLMN_PSEE4</name>
<evidence type="ECO:0000255" key="1">
    <source>
        <dbReference type="HAMAP-Rule" id="MF_01849"/>
    </source>
</evidence>
<evidence type="ECO:0000255" key="2">
    <source>
        <dbReference type="PROSITE-ProRule" id="PRU01266"/>
    </source>
</evidence>
<gene>
    <name evidence="1" type="primary">rlmN</name>
    <name type="ordered locus">PSEEN1018</name>
</gene>
<sequence>MTTSTGKINLLGLTLAEMEQFFDSIGEKRFRAGQVMKWIHHFGVDDFAAMTNVGKVLREKLEAVAEIRGPEVVSEDISADGTRKWVVRVASGSCVETVYIPTDDRGTLCVSSQAGCALDCSFCSTGKQGFNSNLTAAEVIGQVWLANKSFGTVPAKIDRAITNVVMMGMGEPLLNFDNVIAAMKIMMEDLGYGISKRRVTLSTSGVVPMIDELAKHIDVSLALSLHAPNDELRNKLVPINKKYPLKMLLESCMGYMSTLGGKRVLTIEYTLLKDVNDQPEHAAQMIELLRDVPCKINLIPFNPFPHSGYERPSNNAIRRFQDLLHHGGFNVTTRTTRGDDIDAACGQLVGQVNDRTRRSERYIAVRQLADEPQDSAARP</sequence>
<proteinExistence type="inferred from homology"/>
<comment type="function">
    <text evidence="1">Specifically methylates position 2 of adenine 2503 in 23S rRNA and position 2 of adenine 37 in tRNAs. m2A2503 modification seems to play a crucial role in the proofreading step occurring at the peptidyl transferase center and thus would serve to optimize ribosomal fidelity.</text>
</comment>
<comment type="catalytic activity">
    <reaction evidence="1">
        <text>adenosine(2503) in 23S rRNA + 2 reduced [2Fe-2S]-[ferredoxin] + 2 S-adenosyl-L-methionine = 2-methyladenosine(2503) in 23S rRNA + 5'-deoxyadenosine + L-methionine + 2 oxidized [2Fe-2S]-[ferredoxin] + S-adenosyl-L-homocysteine</text>
        <dbReference type="Rhea" id="RHEA:42916"/>
        <dbReference type="Rhea" id="RHEA-COMP:10000"/>
        <dbReference type="Rhea" id="RHEA-COMP:10001"/>
        <dbReference type="Rhea" id="RHEA-COMP:10152"/>
        <dbReference type="Rhea" id="RHEA-COMP:10282"/>
        <dbReference type="ChEBI" id="CHEBI:17319"/>
        <dbReference type="ChEBI" id="CHEBI:33737"/>
        <dbReference type="ChEBI" id="CHEBI:33738"/>
        <dbReference type="ChEBI" id="CHEBI:57844"/>
        <dbReference type="ChEBI" id="CHEBI:57856"/>
        <dbReference type="ChEBI" id="CHEBI:59789"/>
        <dbReference type="ChEBI" id="CHEBI:74411"/>
        <dbReference type="ChEBI" id="CHEBI:74497"/>
        <dbReference type="EC" id="2.1.1.192"/>
    </reaction>
</comment>
<comment type="catalytic activity">
    <reaction evidence="1">
        <text>adenosine(37) in tRNA + 2 reduced [2Fe-2S]-[ferredoxin] + 2 S-adenosyl-L-methionine = 2-methyladenosine(37) in tRNA + 5'-deoxyadenosine + L-methionine + 2 oxidized [2Fe-2S]-[ferredoxin] + S-adenosyl-L-homocysteine</text>
        <dbReference type="Rhea" id="RHEA:43332"/>
        <dbReference type="Rhea" id="RHEA-COMP:10000"/>
        <dbReference type="Rhea" id="RHEA-COMP:10001"/>
        <dbReference type="Rhea" id="RHEA-COMP:10162"/>
        <dbReference type="Rhea" id="RHEA-COMP:10485"/>
        <dbReference type="ChEBI" id="CHEBI:17319"/>
        <dbReference type="ChEBI" id="CHEBI:33737"/>
        <dbReference type="ChEBI" id="CHEBI:33738"/>
        <dbReference type="ChEBI" id="CHEBI:57844"/>
        <dbReference type="ChEBI" id="CHEBI:57856"/>
        <dbReference type="ChEBI" id="CHEBI:59789"/>
        <dbReference type="ChEBI" id="CHEBI:74411"/>
        <dbReference type="ChEBI" id="CHEBI:74497"/>
        <dbReference type="EC" id="2.1.1.192"/>
    </reaction>
</comment>
<comment type="cofactor">
    <cofactor evidence="1">
        <name>[4Fe-4S] cluster</name>
        <dbReference type="ChEBI" id="CHEBI:49883"/>
    </cofactor>
    <text evidence="1">Binds 1 [4Fe-4S] cluster. The cluster is coordinated with 3 cysteines and an exchangeable S-adenosyl-L-methionine.</text>
</comment>
<comment type="subcellular location">
    <subcellularLocation>
        <location evidence="1">Cytoplasm</location>
    </subcellularLocation>
</comment>
<comment type="miscellaneous">
    <text evidence="1">Reaction proceeds by a ping-pong mechanism involving intermediate methylation of a conserved cysteine residue.</text>
</comment>
<comment type="similarity">
    <text evidence="1">Belongs to the radical SAM superfamily. RlmN family.</text>
</comment>
<protein>
    <recommendedName>
        <fullName evidence="1">Dual-specificity RNA methyltransferase RlmN</fullName>
        <ecNumber evidence="1">2.1.1.192</ecNumber>
    </recommendedName>
    <alternativeName>
        <fullName evidence="1">23S rRNA (adenine(2503)-C(2))-methyltransferase</fullName>
    </alternativeName>
    <alternativeName>
        <fullName evidence="1">23S rRNA m2A2503 methyltransferase</fullName>
    </alternativeName>
    <alternativeName>
        <fullName evidence="1">Ribosomal RNA large subunit methyltransferase N</fullName>
    </alternativeName>
    <alternativeName>
        <fullName evidence="1">tRNA (adenine(37)-C(2))-methyltransferase</fullName>
    </alternativeName>
    <alternativeName>
        <fullName evidence="1">tRNA m2A37 methyltransferase</fullName>
    </alternativeName>
</protein>
<reference key="1">
    <citation type="journal article" date="2006" name="Nat. Biotechnol.">
        <title>Complete genome sequence of the entomopathogenic and metabolically versatile soil bacterium Pseudomonas entomophila.</title>
        <authorList>
            <person name="Vodovar N."/>
            <person name="Vallenet D."/>
            <person name="Cruveiller S."/>
            <person name="Rouy Z."/>
            <person name="Barbe V."/>
            <person name="Acosta C."/>
            <person name="Cattolico L."/>
            <person name="Jubin C."/>
            <person name="Lajus A."/>
            <person name="Segurens B."/>
            <person name="Vacherie B."/>
            <person name="Wincker P."/>
            <person name="Weissenbach J."/>
            <person name="Lemaitre B."/>
            <person name="Medigue C."/>
            <person name="Boccard F."/>
        </authorList>
    </citation>
    <scope>NUCLEOTIDE SEQUENCE [LARGE SCALE GENOMIC DNA]</scope>
    <source>
        <strain>L48</strain>
    </source>
</reference>
<feature type="chain" id="PRO_0000350335" description="Dual-specificity RNA methyltransferase RlmN">
    <location>
        <begin position="1"/>
        <end position="379"/>
    </location>
</feature>
<feature type="domain" description="Radical SAM core" evidence="2">
    <location>
        <begin position="102"/>
        <end position="342"/>
    </location>
</feature>
<feature type="active site" description="Proton acceptor" evidence="1">
    <location>
        <position position="96"/>
    </location>
</feature>
<feature type="active site" description="S-methylcysteine intermediate" evidence="1">
    <location>
        <position position="345"/>
    </location>
</feature>
<feature type="binding site" evidence="1">
    <location>
        <position position="116"/>
    </location>
    <ligand>
        <name>[4Fe-4S] cluster</name>
        <dbReference type="ChEBI" id="CHEBI:49883"/>
        <note>4Fe-4S-S-AdoMet</note>
    </ligand>
</feature>
<feature type="binding site" evidence="1">
    <location>
        <position position="120"/>
    </location>
    <ligand>
        <name>[4Fe-4S] cluster</name>
        <dbReference type="ChEBI" id="CHEBI:49883"/>
        <note>4Fe-4S-S-AdoMet</note>
    </ligand>
</feature>
<feature type="binding site" evidence="1">
    <location>
        <position position="123"/>
    </location>
    <ligand>
        <name>[4Fe-4S] cluster</name>
        <dbReference type="ChEBI" id="CHEBI:49883"/>
        <note>4Fe-4S-S-AdoMet</note>
    </ligand>
</feature>
<feature type="binding site" evidence="1">
    <location>
        <begin position="170"/>
        <end position="171"/>
    </location>
    <ligand>
        <name>S-adenosyl-L-methionine</name>
        <dbReference type="ChEBI" id="CHEBI:59789"/>
    </ligand>
</feature>
<feature type="binding site" evidence="1">
    <location>
        <position position="202"/>
    </location>
    <ligand>
        <name>S-adenosyl-L-methionine</name>
        <dbReference type="ChEBI" id="CHEBI:59789"/>
    </ligand>
</feature>
<feature type="binding site" evidence="1">
    <location>
        <begin position="224"/>
        <end position="226"/>
    </location>
    <ligand>
        <name>S-adenosyl-L-methionine</name>
        <dbReference type="ChEBI" id="CHEBI:59789"/>
    </ligand>
</feature>
<feature type="binding site" evidence="1">
    <location>
        <position position="302"/>
    </location>
    <ligand>
        <name>S-adenosyl-L-methionine</name>
        <dbReference type="ChEBI" id="CHEBI:59789"/>
    </ligand>
</feature>
<feature type="disulfide bond" description="(transient)" evidence="1">
    <location>
        <begin position="109"/>
        <end position="345"/>
    </location>
</feature>
<keyword id="KW-0004">4Fe-4S</keyword>
<keyword id="KW-0963">Cytoplasm</keyword>
<keyword id="KW-1015">Disulfide bond</keyword>
<keyword id="KW-0408">Iron</keyword>
<keyword id="KW-0411">Iron-sulfur</keyword>
<keyword id="KW-0479">Metal-binding</keyword>
<keyword id="KW-0489">Methyltransferase</keyword>
<keyword id="KW-0698">rRNA processing</keyword>
<keyword id="KW-0949">S-adenosyl-L-methionine</keyword>
<keyword id="KW-0808">Transferase</keyword>
<keyword id="KW-0819">tRNA processing</keyword>
<dbReference type="EC" id="2.1.1.192" evidence="1"/>
<dbReference type="EMBL" id="CT573326">
    <property type="protein sequence ID" value="CAK13921.1"/>
    <property type="molecule type" value="Genomic_DNA"/>
</dbReference>
<dbReference type="RefSeq" id="WP_011532344.1">
    <property type="nucleotide sequence ID" value="NC_008027.1"/>
</dbReference>
<dbReference type="SMR" id="Q1IEI4"/>
<dbReference type="STRING" id="384676.PSEEN1018"/>
<dbReference type="GeneID" id="32804313"/>
<dbReference type="KEGG" id="pen:PSEEN1018"/>
<dbReference type="eggNOG" id="COG0820">
    <property type="taxonomic scope" value="Bacteria"/>
</dbReference>
<dbReference type="HOGENOM" id="CLU_029101_0_0_6"/>
<dbReference type="OrthoDB" id="9793973at2"/>
<dbReference type="Proteomes" id="UP000000658">
    <property type="component" value="Chromosome"/>
</dbReference>
<dbReference type="GO" id="GO:0005737">
    <property type="term" value="C:cytoplasm"/>
    <property type="evidence" value="ECO:0007669"/>
    <property type="project" value="UniProtKB-SubCell"/>
</dbReference>
<dbReference type="GO" id="GO:0051539">
    <property type="term" value="F:4 iron, 4 sulfur cluster binding"/>
    <property type="evidence" value="ECO:0007669"/>
    <property type="project" value="UniProtKB-UniRule"/>
</dbReference>
<dbReference type="GO" id="GO:0046872">
    <property type="term" value="F:metal ion binding"/>
    <property type="evidence" value="ECO:0007669"/>
    <property type="project" value="UniProtKB-KW"/>
</dbReference>
<dbReference type="GO" id="GO:0070040">
    <property type="term" value="F:rRNA (adenine(2503)-C2-)-methyltransferase activity"/>
    <property type="evidence" value="ECO:0007669"/>
    <property type="project" value="UniProtKB-UniRule"/>
</dbReference>
<dbReference type="GO" id="GO:0019843">
    <property type="term" value="F:rRNA binding"/>
    <property type="evidence" value="ECO:0007669"/>
    <property type="project" value="UniProtKB-UniRule"/>
</dbReference>
<dbReference type="GO" id="GO:0002935">
    <property type="term" value="F:tRNA (adenine(37)-C2)-methyltransferase activity"/>
    <property type="evidence" value="ECO:0007669"/>
    <property type="project" value="UniProtKB-UniRule"/>
</dbReference>
<dbReference type="GO" id="GO:0000049">
    <property type="term" value="F:tRNA binding"/>
    <property type="evidence" value="ECO:0007669"/>
    <property type="project" value="UniProtKB-UniRule"/>
</dbReference>
<dbReference type="GO" id="GO:0070475">
    <property type="term" value="P:rRNA base methylation"/>
    <property type="evidence" value="ECO:0007669"/>
    <property type="project" value="UniProtKB-UniRule"/>
</dbReference>
<dbReference type="GO" id="GO:0030488">
    <property type="term" value="P:tRNA methylation"/>
    <property type="evidence" value="ECO:0007669"/>
    <property type="project" value="UniProtKB-UniRule"/>
</dbReference>
<dbReference type="CDD" id="cd01335">
    <property type="entry name" value="Radical_SAM"/>
    <property type="match status" value="1"/>
</dbReference>
<dbReference type="FunFam" id="1.10.150.530:FF:000003">
    <property type="entry name" value="Dual-specificity RNA methyltransferase RlmN"/>
    <property type="match status" value="1"/>
</dbReference>
<dbReference type="FunFam" id="3.20.20.70:FF:000008">
    <property type="entry name" value="Dual-specificity RNA methyltransferase RlmN"/>
    <property type="match status" value="1"/>
</dbReference>
<dbReference type="Gene3D" id="1.10.150.530">
    <property type="match status" value="1"/>
</dbReference>
<dbReference type="Gene3D" id="3.20.20.70">
    <property type="entry name" value="Aldolase class I"/>
    <property type="match status" value="1"/>
</dbReference>
<dbReference type="HAMAP" id="MF_01849">
    <property type="entry name" value="RNA_methyltr_RlmN"/>
    <property type="match status" value="1"/>
</dbReference>
<dbReference type="InterPro" id="IPR013785">
    <property type="entry name" value="Aldolase_TIM"/>
</dbReference>
<dbReference type="InterPro" id="IPR040072">
    <property type="entry name" value="Methyltransferase_A"/>
</dbReference>
<dbReference type="InterPro" id="IPR048641">
    <property type="entry name" value="RlmN_N"/>
</dbReference>
<dbReference type="InterPro" id="IPR027492">
    <property type="entry name" value="RNA_MTrfase_RlmN"/>
</dbReference>
<dbReference type="InterPro" id="IPR004383">
    <property type="entry name" value="rRNA_lsu_MTrfase_RlmN/Cfr"/>
</dbReference>
<dbReference type="InterPro" id="IPR007197">
    <property type="entry name" value="rSAM"/>
</dbReference>
<dbReference type="NCBIfam" id="TIGR00048">
    <property type="entry name" value="rRNA_mod_RlmN"/>
    <property type="match status" value="1"/>
</dbReference>
<dbReference type="PANTHER" id="PTHR30544">
    <property type="entry name" value="23S RRNA METHYLTRANSFERASE"/>
    <property type="match status" value="1"/>
</dbReference>
<dbReference type="PANTHER" id="PTHR30544:SF5">
    <property type="entry name" value="RADICAL SAM CORE DOMAIN-CONTAINING PROTEIN"/>
    <property type="match status" value="1"/>
</dbReference>
<dbReference type="Pfam" id="PF04055">
    <property type="entry name" value="Radical_SAM"/>
    <property type="match status" value="1"/>
</dbReference>
<dbReference type="Pfam" id="PF21016">
    <property type="entry name" value="RlmN_N"/>
    <property type="match status" value="1"/>
</dbReference>
<dbReference type="PIRSF" id="PIRSF006004">
    <property type="entry name" value="CHP00048"/>
    <property type="match status" value="1"/>
</dbReference>
<dbReference type="SFLD" id="SFLDF00275">
    <property type="entry name" value="adenosine_C2_methyltransferase"/>
    <property type="match status" value="1"/>
</dbReference>
<dbReference type="SFLD" id="SFLDG01062">
    <property type="entry name" value="methyltransferase_(Class_A)"/>
    <property type="match status" value="1"/>
</dbReference>
<dbReference type="SUPFAM" id="SSF102114">
    <property type="entry name" value="Radical SAM enzymes"/>
    <property type="match status" value="1"/>
</dbReference>
<dbReference type="PROSITE" id="PS51918">
    <property type="entry name" value="RADICAL_SAM"/>
    <property type="match status" value="1"/>
</dbReference>